<dbReference type="EMBL" id="M61883">
    <property type="protein sequence ID" value="AAA30998.1"/>
    <property type="molecule type" value="mRNA"/>
</dbReference>
<dbReference type="EMBL" id="M21174">
    <property type="protein sequence ID" value="AAA30990.1"/>
    <property type="molecule type" value="mRNA"/>
</dbReference>
<dbReference type="SMR" id="P12021"/>
<dbReference type="GlyGen" id="P12021">
    <property type="glycosylation" value="39 sites"/>
</dbReference>
<dbReference type="iPTMnet" id="P12021"/>
<dbReference type="eggNOG" id="KOG1216">
    <property type="taxonomic scope" value="Eukaryota"/>
</dbReference>
<dbReference type="InParanoid" id="P12021"/>
<dbReference type="Proteomes" id="UP000008227">
    <property type="component" value="Unplaced"/>
</dbReference>
<dbReference type="Proteomes" id="UP000314985">
    <property type="component" value="Unplaced"/>
</dbReference>
<dbReference type="Proteomes" id="UP000694570">
    <property type="component" value="Unplaced"/>
</dbReference>
<dbReference type="Proteomes" id="UP000694571">
    <property type="component" value="Unplaced"/>
</dbReference>
<dbReference type="Proteomes" id="UP000694720">
    <property type="component" value="Unplaced"/>
</dbReference>
<dbReference type="Proteomes" id="UP000694722">
    <property type="component" value="Unplaced"/>
</dbReference>
<dbReference type="Proteomes" id="UP000694723">
    <property type="component" value="Unplaced"/>
</dbReference>
<dbReference type="Proteomes" id="UP000694724">
    <property type="component" value="Unplaced"/>
</dbReference>
<dbReference type="Proteomes" id="UP000694725">
    <property type="component" value="Unplaced"/>
</dbReference>
<dbReference type="Proteomes" id="UP000694726">
    <property type="component" value="Unplaced"/>
</dbReference>
<dbReference type="Proteomes" id="UP000694727">
    <property type="component" value="Unplaced"/>
</dbReference>
<dbReference type="Proteomes" id="UP000694728">
    <property type="component" value="Unplaced"/>
</dbReference>
<dbReference type="GO" id="GO:0005576">
    <property type="term" value="C:extracellular region"/>
    <property type="evidence" value="ECO:0007669"/>
    <property type="project" value="UniProtKB-SubCell"/>
</dbReference>
<dbReference type="InterPro" id="IPR006207">
    <property type="entry name" value="Cys_knot_C"/>
</dbReference>
<dbReference type="InterPro" id="IPR006208">
    <property type="entry name" value="Glyco_hormone_CN"/>
</dbReference>
<dbReference type="InterPro" id="IPR001007">
    <property type="entry name" value="VWF_dom"/>
</dbReference>
<dbReference type="PANTHER" id="PTHR47246">
    <property type="entry name" value="MUCIN-19"/>
    <property type="match status" value="1"/>
</dbReference>
<dbReference type="PANTHER" id="PTHR47246:SF1">
    <property type="entry name" value="MUCIN-19"/>
    <property type="match status" value="1"/>
</dbReference>
<dbReference type="Pfam" id="PF00007">
    <property type="entry name" value="Cys_knot"/>
    <property type="match status" value="1"/>
</dbReference>
<dbReference type="SMART" id="SM00041">
    <property type="entry name" value="CT"/>
    <property type="match status" value="1"/>
</dbReference>
<dbReference type="SMART" id="SM00214">
    <property type="entry name" value="VWC"/>
    <property type="match status" value="2"/>
</dbReference>
<dbReference type="SUPFAM" id="SSF57603">
    <property type="entry name" value="FnI-like domain"/>
    <property type="match status" value="1"/>
</dbReference>
<dbReference type="PROSITE" id="PS01185">
    <property type="entry name" value="CTCK_1"/>
    <property type="match status" value="1"/>
</dbReference>
<dbReference type="PROSITE" id="PS01225">
    <property type="entry name" value="CTCK_2"/>
    <property type="match status" value="1"/>
</dbReference>
<dbReference type="PROSITE" id="PS01208">
    <property type="entry name" value="VWFC_1"/>
    <property type="match status" value="1"/>
</dbReference>
<dbReference type="PROSITE" id="PS50184">
    <property type="entry name" value="VWFC_2"/>
    <property type="match status" value="1"/>
</dbReference>
<sequence>ETARPSVAGSGTTGTVSGASGSTGSSSGSTGATGASIGQPETSRISVAGSSGAPAVSSGASQAAGTSGAGPGTTASSVGVTETARPSVAGSGTTGTVSGASGSTGSSSGSPGATGASIGQPETSRISVAGSSGAPAVSSGASQAAGTSGAGPGTTASSVGVTETARPSVAGSGTTGTVSGASGSTGSSSGSPGATGASIGQPETSRISVAGSSGAPAVSSGASQAAGTSGAGPGTTASSVGVTETARPSVAGSGTTGTVSGASGSTGSSSGSPGATGASIGQPETSRISVAGSSGAPAVSSGASQAAGTSGAGPGTTASSVGVTETARPSVAGSGTTGTVSGASGSTGSSSGSPGATGASIGQPETSRISVAGSSGAPAVSSGASQAAGTSEATTSIEGAGTSGVGFKTEATTFPGENETTRVGIATGTTGIVSRKTLEPGSYNTEATTSIGRSGTTHTDLPGGTTIVLPGFSHSSQSSKPGSSVTTPGSPESGSETGTSGEFSTTVISGSSHTEATTFIGGSGSPGTGSRPGTTGELSGTTIASGNATTEATTSTETRIGPQTGAQTTVPGSQVSGSETGTSEAVSNPAIASGSSSTGTTSGASDSQVTGSRTGTTGVVLGTTVAPGSSSTGATTGVLINEGTRSTSLGTTRVASGTTYESGTSNSVPSGGSGTPGSGINTGGSSTQVTGIQTGTTAVGFGSTLLPGSSNTGATTSPSERTSPGSKTGITRVVSGTTVASGSSNTGATTSLGRGETTQGGIKIVITGVTVGTTVAPGSFNTKATTPTEVRAATGAGTAVGATSRSTGISTGPENSTPGTTETGSGTTSSPGGVKTEATTFKGVGTTEAGISSGNSPGSGGVTSSQEGTSREASETTTAPRISATGSTSVSKEITASPKVSSPETTAGATEDQENENKTGCPAPLPPPPVCHGPLGEEKSPGDVWTANCHKCTCTEAKTVDCKPKECPSPPTCKTGERLIKFKANDTCCEIGHCEKRTCLFNNTDYEVGSSFDDPNNPCVTYSCQNTGFTAVVQNCPKQTWCAEEDRVYDSKQCCYTCKSSCKPSPVNVTVRYNGCTIKVEMARCVGECKKTVTYDYDIFQLKNSCLCCQEEDYEFRDIVLDCPDGSTLPYRYRHITACSCLDPCQQSMT</sequence>
<evidence type="ECO:0000255" key="1"/>
<evidence type="ECO:0000255" key="2">
    <source>
        <dbReference type="PROSITE-ProRule" id="PRU00039"/>
    </source>
</evidence>
<evidence type="ECO:0000255" key="3">
    <source>
        <dbReference type="PROSITE-ProRule" id="PRU00220"/>
    </source>
</evidence>
<evidence type="ECO:0000256" key="4">
    <source>
        <dbReference type="SAM" id="MobiDB-lite"/>
    </source>
</evidence>
<evidence type="ECO:0000269" key="5">
    <source>
    </source>
</evidence>
<feature type="chain" id="PRO_0000158958" description="Apomucin">
    <location>
        <begin position="1" status="less than"/>
        <end position="1150"/>
    </location>
</feature>
<feature type="repeat" description="1">
    <location>
        <begin position="1" status="less than"/>
        <end position="44"/>
    </location>
</feature>
<feature type="repeat" description="2">
    <location>
        <begin position="45"/>
        <end position="125"/>
    </location>
</feature>
<feature type="repeat" description="3">
    <location>
        <begin position="126"/>
        <end position="206"/>
    </location>
</feature>
<feature type="repeat" description="4">
    <location>
        <begin position="207"/>
        <end position="287"/>
    </location>
</feature>
<feature type="repeat" description="5">
    <location>
        <begin position="288"/>
        <end position="368"/>
    </location>
</feature>
<feature type="repeat" description="6; truncated">
    <location>
        <begin position="369"/>
        <end position="391"/>
    </location>
</feature>
<feature type="domain" description="VWFC" evidence="3">
    <location>
        <begin position="929"/>
        <end position="995"/>
    </location>
</feature>
<feature type="domain" description="CTCK" evidence="2">
    <location>
        <begin position="1062"/>
        <end position="1146"/>
    </location>
</feature>
<feature type="region of interest" description="6 X 81 AA tandem repeats">
    <location>
        <begin position="1" status="less than"/>
        <end position="368"/>
    </location>
</feature>
<feature type="region of interest" description="Disordered" evidence="4">
    <location>
        <begin position="1"/>
        <end position="730"/>
    </location>
</feature>
<feature type="region of interest" description="Disordered" evidence="4">
    <location>
        <begin position="776"/>
        <end position="925"/>
    </location>
</feature>
<feature type="compositionally biased region" description="Low complexity" evidence="4">
    <location>
        <begin position="1"/>
        <end position="36"/>
    </location>
</feature>
<feature type="compositionally biased region" description="Low complexity" evidence="4">
    <location>
        <begin position="46"/>
        <end position="79"/>
    </location>
</feature>
<feature type="compositionally biased region" description="Low complexity" evidence="4">
    <location>
        <begin position="86"/>
        <end position="117"/>
    </location>
</feature>
<feature type="compositionally biased region" description="Low complexity" evidence="4">
    <location>
        <begin position="127"/>
        <end position="160"/>
    </location>
</feature>
<feature type="compositionally biased region" description="Low complexity" evidence="4">
    <location>
        <begin position="167"/>
        <end position="198"/>
    </location>
</feature>
<feature type="compositionally biased region" description="Low complexity" evidence="4">
    <location>
        <begin position="208"/>
        <end position="241"/>
    </location>
</feature>
<feature type="compositionally biased region" description="Low complexity" evidence="4">
    <location>
        <begin position="248"/>
        <end position="279"/>
    </location>
</feature>
<feature type="compositionally biased region" description="Low complexity" evidence="4">
    <location>
        <begin position="289"/>
        <end position="322"/>
    </location>
</feature>
<feature type="compositionally biased region" description="Low complexity" evidence="4">
    <location>
        <begin position="329"/>
        <end position="360"/>
    </location>
</feature>
<feature type="compositionally biased region" description="Low complexity" evidence="4">
    <location>
        <begin position="370"/>
        <end position="396"/>
    </location>
</feature>
<feature type="compositionally biased region" description="Polar residues" evidence="4">
    <location>
        <begin position="442"/>
        <end position="459"/>
    </location>
</feature>
<feature type="compositionally biased region" description="Low complexity" evidence="4">
    <location>
        <begin position="473"/>
        <end position="506"/>
    </location>
</feature>
<feature type="compositionally biased region" description="Polar residues" evidence="4">
    <location>
        <begin position="507"/>
        <end position="517"/>
    </location>
</feature>
<feature type="compositionally biased region" description="Polar residues" evidence="4">
    <location>
        <begin position="537"/>
        <end position="547"/>
    </location>
</feature>
<feature type="compositionally biased region" description="Low complexity" evidence="4">
    <location>
        <begin position="548"/>
        <end position="558"/>
    </location>
</feature>
<feature type="compositionally biased region" description="Polar residues" evidence="4">
    <location>
        <begin position="564"/>
        <end position="586"/>
    </location>
</feature>
<feature type="compositionally biased region" description="Low complexity" evidence="4">
    <location>
        <begin position="590"/>
        <end position="625"/>
    </location>
</feature>
<feature type="compositionally biased region" description="Polar residues" evidence="4">
    <location>
        <begin position="626"/>
        <end position="635"/>
    </location>
</feature>
<feature type="compositionally biased region" description="Polar residues" evidence="4">
    <location>
        <begin position="643"/>
        <end position="661"/>
    </location>
</feature>
<feature type="compositionally biased region" description="Gly residues" evidence="4">
    <location>
        <begin position="671"/>
        <end position="682"/>
    </location>
</feature>
<feature type="compositionally biased region" description="Polar residues" evidence="4">
    <location>
        <begin position="688"/>
        <end position="697"/>
    </location>
</feature>
<feature type="compositionally biased region" description="Polar residues" evidence="4">
    <location>
        <begin position="706"/>
        <end position="729"/>
    </location>
</feature>
<feature type="compositionally biased region" description="Polar residues" evidence="4">
    <location>
        <begin position="779"/>
        <end position="788"/>
    </location>
</feature>
<feature type="compositionally biased region" description="Low complexity" evidence="4">
    <location>
        <begin position="790"/>
        <end position="833"/>
    </location>
</feature>
<feature type="compositionally biased region" description="Polar residues" evidence="4">
    <location>
        <begin position="875"/>
        <end position="908"/>
    </location>
</feature>
<feature type="glycosylation site" description="O-linked (GalNAc...) serine; partial" evidence="5">
    <location>
        <position position="46"/>
    </location>
</feature>
<feature type="glycosylation site" description="O-linked (GalNAc...) serine; partial" evidence="5">
    <location>
        <position position="50"/>
    </location>
</feature>
<feature type="glycosylation site" description="O-linked (GalNAc...) serine; partial" evidence="5">
    <location>
        <position position="51"/>
    </location>
</feature>
<feature type="glycosylation site" description="O-linked (GalNAc...) serine; partial" evidence="5">
    <location>
        <position position="57"/>
    </location>
</feature>
<feature type="glycosylation site" description="O-linked (GalNAc...) serine; partial" evidence="5">
    <location>
        <position position="58"/>
    </location>
</feature>
<feature type="glycosylation site" description="O-linked (GalNAc...) serine; partial" evidence="5">
    <location>
        <position position="61"/>
    </location>
</feature>
<feature type="glycosylation site" description="O-linked (GalNAc...) threonine; partial" evidence="5">
    <location>
        <position position="66"/>
    </location>
</feature>
<feature type="glycosylation site" description="O-linked (GalNAc...) serine; partial" evidence="5">
    <location>
        <position position="67"/>
    </location>
</feature>
<feature type="glycosylation site" description="O-linked (GalNAc...) threonine; partial" evidence="5">
    <location>
        <position position="73"/>
    </location>
</feature>
<feature type="glycosylation site" description="O-linked (GalNAc...) threonine; partial" evidence="5">
    <location>
        <position position="74"/>
    </location>
</feature>
<feature type="glycosylation site" description="O-linked (GalNAc...) serine; partial" evidence="5">
    <location>
        <position position="76"/>
    </location>
</feature>
<feature type="glycosylation site" description="O-linked (GalNAc...) serine; partial" evidence="5">
    <location>
        <position position="77"/>
    </location>
</feature>
<feature type="glycosylation site" description="O-linked (GalNAc...) threonine; partial" evidence="5">
    <location>
        <position position="81"/>
    </location>
</feature>
<feature type="glycosylation site" description="O-linked (GalNAc...) threonine; partial" evidence="5">
    <location>
        <position position="83"/>
    </location>
</feature>
<feature type="glycosylation site" description="O-linked (GalNAc...) serine; partial" evidence="5">
    <location>
        <position position="87"/>
    </location>
</feature>
<feature type="glycosylation site" description="O-linked (GalNAc...) serine; partial" evidence="5">
    <location>
        <position position="91"/>
    </location>
</feature>
<feature type="glycosylation site" description="O-linked (GalNAc...) threonine; partial" evidence="5">
    <location>
        <position position="93"/>
    </location>
</feature>
<feature type="glycosylation site" description="O-linked (GalNAc...) threonine; partial" evidence="5">
    <location>
        <position position="94"/>
    </location>
</feature>
<feature type="glycosylation site" description="O-linked (GalNAc...) threonine; partial" evidence="5">
    <location>
        <position position="96"/>
    </location>
</feature>
<feature type="glycosylation site" description="O-linked (GalNAc...) serine; partial" evidence="5">
    <location>
        <position position="98"/>
    </location>
</feature>
<feature type="glycosylation site" description="O-linked (GalNAc...) serine; partial" evidence="5">
    <location>
        <position position="101"/>
    </location>
</feature>
<feature type="glycosylation site" description="O-linked (GalNAc...) serine; partial" evidence="5">
    <location>
        <position position="103"/>
    </location>
</feature>
<feature type="glycosylation site" description="O-linked (GalNAc...) threonine; partial" evidence="5">
    <location>
        <position position="104"/>
    </location>
</feature>
<feature type="glycosylation site" description="O-linked (GalNAc...) serine; partial" evidence="5">
    <location>
        <position position="106"/>
    </location>
</feature>
<feature type="glycosylation site" description="O-linked (GalNAc...) serine; partial" evidence="5">
    <location>
        <position position="107"/>
    </location>
</feature>
<feature type="glycosylation site" description="O-linked (GalNAc...) serine; partial" evidence="5">
    <location>
        <position position="108"/>
    </location>
</feature>
<feature type="glycosylation site" description="O-linked (GalNAc...) serine; partial" evidence="5">
    <location>
        <position position="110"/>
    </location>
</feature>
<feature type="glycosylation site" description="O-linked (GalNAc...) threonine; partial" evidence="5">
    <location>
        <position position="114"/>
    </location>
</feature>
<feature type="glycosylation site" description="O-linked (GalNAc...) serine; partial" evidence="5">
    <location>
        <position position="117"/>
    </location>
</feature>
<feature type="glycosylation site" description="O-linked (GalNAc...) threonine; partial" evidence="5">
    <location>
        <position position="123"/>
    </location>
</feature>
<feature type="glycosylation site" description="O-linked (GalNAc...) serine; partial" evidence="5">
    <location>
        <position position="124"/>
    </location>
</feature>
<feature type="glycosylation site" description="N-linked (GlcNAc...) asparagine" evidence="1">
    <location>
        <position position="418"/>
    </location>
</feature>
<feature type="glycosylation site" description="N-linked (GlcNAc...) asparagine" evidence="1">
    <location>
        <position position="547"/>
    </location>
</feature>
<feature type="glycosylation site" description="N-linked (GlcNAc...) asparagine" evidence="1">
    <location>
        <position position="917"/>
    </location>
</feature>
<feature type="glycosylation site" description="N-linked (GlcNAc...) asparagine" evidence="1">
    <location>
        <position position="985"/>
    </location>
</feature>
<feature type="glycosylation site" description="N-linked (GlcNAc...) asparagine" evidence="1">
    <location>
        <position position="1002"/>
    </location>
</feature>
<feature type="glycosylation site" description="N-linked (GlcNAc...) asparagine" evidence="1">
    <location>
        <position position="1068"/>
    </location>
</feature>
<feature type="disulfide bond" evidence="2">
    <location>
        <begin position="1062"/>
        <end position="1109"/>
    </location>
</feature>
<feature type="disulfide bond" evidence="2">
    <location>
        <begin position="1076"/>
        <end position="1123"/>
    </location>
</feature>
<feature type="disulfide bond" evidence="2">
    <location>
        <begin position="1085"/>
        <end position="1139"/>
    </location>
</feature>
<feature type="disulfide bond" evidence="2">
    <location>
        <begin position="1089"/>
        <end position="1141"/>
    </location>
</feature>
<feature type="disulfide bond" evidence="2">
    <location>
        <begin status="unknown"/>
        <end position="1145"/>
    </location>
</feature>
<feature type="non-terminal residue">
    <location>
        <position position="1"/>
    </location>
</feature>
<keyword id="KW-0903">Direct protein sequencing</keyword>
<keyword id="KW-1015">Disulfide bond</keyword>
<keyword id="KW-0325">Glycoprotein</keyword>
<keyword id="KW-1185">Reference proteome</keyword>
<keyword id="KW-0677">Repeat</keyword>
<keyword id="KW-0964">Secreted</keyword>
<name>MUCAP_PIG</name>
<comment type="function">
    <text>Apomucin is part of mucin, the major glycoprotein synthesized and secreted by mucous cells of the submaxillary gland. Its highly viscous aqueous solutions serve to lubricate the oral cavity and to protect it from the external environment.</text>
</comment>
<comment type="subunit">
    <text>Intermolecular disulfide bonds could help maintain a multimeric mucin structure.</text>
</comment>
<comment type="subcellular location">
    <subcellularLocation>
        <location>Secreted</location>
    </subcellularLocation>
</comment>
<comment type="tissue specificity">
    <text>Submaxillary mucosae.</text>
</comment>
<comment type="domain">
    <text>Contains tandemly repeated, identical sequences of 81 residues.</text>
</comment>
<comment type="PTM">
    <text evidence="5">Extensively O-glycosylated on most but not all Ser and Thr residues of the repeat units. Highest glycosylation appears to occur on Ser residues which have Gly at positions at +2 or -2 from the glycosylation site or, where Gly is the penultimate residue. The presence of proline (usually at position +3 or -3) appears to also enhance glycosylation.</text>
</comment>
<accession>P12021</accession>
<reference key="1">
    <citation type="journal article" date="1991" name="J. Biol. Chem.">
        <title>Porcine submaxillary mucin contains a cystine-rich, carboxyl-terminal domain in addition to a highly repetitive, glycosylated domain.</title>
        <authorList>
            <person name="Eckhardt A.E."/>
            <person name="Timpte C.S."/>
            <person name="Abernethy J.L."/>
            <person name="Zhao Y."/>
            <person name="Hill R.L."/>
        </authorList>
    </citation>
    <scope>NUCLEOTIDE SEQUENCE [MRNA]</scope>
    <source>
        <tissue>Submandibular gland</tissue>
    </source>
</reference>
<reference key="2">
    <citation type="journal article" date="1988" name="J. Biol. Chem.">
        <title>Porcine submaxillary gland apomucin contains tandemly repeated, identical sequences of 81 residues.</title>
        <authorList>
            <person name="Timpte C.S."/>
            <person name="Eckhardt A.E."/>
            <person name="Abernethy J.L."/>
            <person name="Hill R.L."/>
        </authorList>
    </citation>
    <scope>NUCLEOTIDE SEQUENCE [MRNA] OF 1-503</scope>
    <source>
        <tissue>Submandibular gland</tissue>
    </source>
</reference>
<reference key="3">
    <citation type="journal article" date="1987" name="J. Biol. Chem.">
        <title>Structural properties of porcine submaxillary gland apomucin.</title>
        <authorList>
            <person name="Eckhardt A.E."/>
            <person name="Timpte C.S."/>
            <person name="Abernethy J.L."/>
            <person name="Toumadje A."/>
            <person name="Johnson W.C. Jr."/>
            <person name="Hill R.L."/>
        </authorList>
    </citation>
    <scope>PROTEIN SEQUENCE OF 45-80</scope>
    <source>
        <tissue>Submandibular gland</tissue>
    </source>
</reference>
<reference key="4">
    <citation type="journal article" date="1997" name="J. Biol. Chem.">
        <title>Determination of the site-specific O-glycosylation pattern of the porcine submaxillary mucin tandem repeat glycopeptide. Model proposed for the polypeptide:GalNAc transferase peptide binding site.</title>
        <authorList>
            <person name="Gerken T.A."/>
            <person name="Owens C.L."/>
            <person name="Pasumarthy M."/>
        </authorList>
    </citation>
    <scope>PROTEIN SEQUENCE OF 45-125</scope>
    <scope>GLYCOSYLATION AT SER-46; SER-50; SER-51; SER-57; SER-58; SER-61; THR-66; SER-67; THR-73; THR-74; SER-76; SER-77; THR-81; THR-83; SER-87; SER-91; THR-93; THR-94; THR-96; SER-98; SER-101; SER-103; THR-104; SER-106; SER-107; SER-108; SER-110; THR-114; SER-117; THR-123 AND SER-124</scope>
    <source>
        <tissue>Submandibular gland</tissue>
    </source>
</reference>
<proteinExistence type="evidence at protein level"/>
<protein>
    <recommendedName>
        <fullName>Apomucin</fullName>
    </recommendedName>
    <alternativeName>
        <fullName>Mucin core protein</fullName>
    </alternativeName>
</protein>
<organism>
    <name type="scientific">Sus scrofa</name>
    <name type="common">Pig</name>
    <dbReference type="NCBI Taxonomy" id="9823"/>
    <lineage>
        <taxon>Eukaryota</taxon>
        <taxon>Metazoa</taxon>
        <taxon>Chordata</taxon>
        <taxon>Craniata</taxon>
        <taxon>Vertebrata</taxon>
        <taxon>Euteleostomi</taxon>
        <taxon>Mammalia</taxon>
        <taxon>Eutheria</taxon>
        <taxon>Laurasiatheria</taxon>
        <taxon>Artiodactyla</taxon>
        <taxon>Suina</taxon>
        <taxon>Suidae</taxon>
        <taxon>Sus</taxon>
    </lineage>
</organism>